<feature type="signal peptide" evidence="1">
    <location>
        <begin position="1"/>
        <end position="24"/>
    </location>
</feature>
<feature type="chain" id="PRO_0000045285" description="UPF0357 protein C1687.07">
    <location>
        <begin position="25"/>
        <end position="124"/>
    </location>
</feature>
<proteinExistence type="inferred from homology"/>
<comment type="similarity">
    <text evidence="2">Belongs to the UPF0357 family.</text>
</comment>
<organism>
    <name type="scientific">Schizosaccharomyces pombe (strain 972 / ATCC 24843)</name>
    <name type="common">Fission yeast</name>
    <dbReference type="NCBI Taxonomy" id="284812"/>
    <lineage>
        <taxon>Eukaryota</taxon>
        <taxon>Fungi</taxon>
        <taxon>Dikarya</taxon>
        <taxon>Ascomycota</taxon>
        <taxon>Taphrinomycotina</taxon>
        <taxon>Schizosaccharomycetes</taxon>
        <taxon>Schizosaccharomycetales</taxon>
        <taxon>Schizosaccharomycetaceae</taxon>
        <taxon>Schizosaccharomyces</taxon>
    </lineage>
</organism>
<protein>
    <recommendedName>
        <fullName>UPF0357 protein C1687.07</fullName>
    </recommendedName>
</protein>
<name>YFF7_SCHPO</name>
<reference key="1">
    <citation type="journal article" date="2002" name="Nature">
        <title>The genome sequence of Schizosaccharomyces pombe.</title>
        <authorList>
            <person name="Wood V."/>
            <person name="Gwilliam R."/>
            <person name="Rajandream M.A."/>
            <person name="Lyne M.H."/>
            <person name="Lyne R."/>
            <person name="Stewart A."/>
            <person name="Sgouros J.G."/>
            <person name="Peat N."/>
            <person name="Hayles J."/>
            <person name="Baker S.G."/>
            <person name="Basham D."/>
            <person name="Bowman S."/>
            <person name="Brooks K."/>
            <person name="Brown D."/>
            <person name="Brown S."/>
            <person name="Chillingworth T."/>
            <person name="Churcher C.M."/>
            <person name="Collins M."/>
            <person name="Connor R."/>
            <person name="Cronin A."/>
            <person name="Davis P."/>
            <person name="Feltwell T."/>
            <person name="Fraser A."/>
            <person name="Gentles S."/>
            <person name="Goble A."/>
            <person name="Hamlin N."/>
            <person name="Harris D.E."/>
            <person name="Hidalgo J."/>
            <person name="Hodgson G."/>
            <person name="Holroyd S."/>
            <person name="Hornsby T."/>
            <person name="Howarth S."/>
            <person name="Huckle E.J."/>
            <person name="Hunt S."/>
            <person name="Jagels K."/>
            <person name="James K.D."/>
            <person name="Jones L."/>
            <person name="Jones M."/>
            <person name="Leather S."/>
            <person name="McDonald S."/>
            <person name="McLean J."/>
            <person name="Mooney P."/>
            <person name="Moule S."/>
            <person name="Mungall K.L."/>
            <person name="Murphy L.D."/>
            <person name="Niblett D."/>
            <person name="Odell C."/>
            <person name="Oliver K."/>
            <person name="O'Neil S."/>
            <person name="Pearson D."/>
            <person name="Quail M.A."/>
            <person name="Rabbinowitsch E."/>
            <person name="Rutherford K.M."/>
            <person name="Rutter S."/>
            <person name="Saunders D."/>
            <person name="Seeger K."/>
            <person name="Sharp S."/>
            <person name="Skelton J."/>
            <person name="Simmonds M.N."/>
            <person name="Squares R."/>
            <person name="Squares S."/>
            <person name="Stevens K."/>
            <person name="Taylor K."/>
            <person name="Taylor R.G."/>
            <person name="Tivey A."/>
            <person name="Walsh S.V."/>
            <person name="Warren T."/>
            <person name="Whitehead S."/>
            <person name="Woodward J.R."/>
            <person name="Volckaert G."/>
            <person name="Aert R."/>
            <person name="Robben J."/>
            <person name="Grymonprez B."/>
            <person name="Weltjens I."/>
            <person name="Vanstreels E."/>
            <person name="Rieger M."/>
            <person name="Schaefer M."/>
            <person name="Mueller-Auer S."/>
            <person name="Gabel C."/>
            <person name="Fuchs M."/>
            <person name="Duesterhoeft A."/>
            <person name="Fritzc C."/>
            <person name="Holzer E."/>
            <person name="Moestl D."/>
            <person name="Hilbert H."/>
            <person name="Borzym K."/>
            <person name="Langer I."/>
            <person name="Beck A."/>
            <person name="Lehrach H."/>
            <person name="Reinhardt R."/>
            <person name="Pohl T.M."/>
            <person name="Eger P."/>
            <person name="Zimmermann W."/>
            <person name="Wedler H."/>
            <person name="Wambutt R."/>
            <person name="Purnelle B."/>
            <person name="Goffeau A."/>
            <person name="Cadieu E."/>
            <person name="Dreano S."/>
            <person name="Gloux S."/>
            <person name="Lelaure V."/>
            <person name="Mottier S."/>
            <person name="Galibert F."/>
            <person name="Aves S.J."/>
            <person name="Xiang Z."/>
            <person name="Hunt C."/>
            <person name="Moore K."/>
            <person name="Hurst S.M."/>
            <person name="Lucas M."/>
            <person name="Rochet M."/>
            <person name="Gaillardin C."/>
            <person name="Tallada V.A."/>
            <person name="Garzon A."/>
            <person name="Thode G."/>
            <person name="Daga R.R."/>
            <person name="Cruzado L."/>
            <person name="Jimenez J."/>
            <person name="Sanchez M."/>
            <person name="del Rey F."/>
            <person name="Benito J."/>
            <person name="Dominguez A."/>
            <person name="Revuelta J.L."/>
            <person name="Moreno S."/>
            <person name="Armstrong J."/>
            <person name="Forsburg S.L."/>
            <person name="Cerutti L."/>
            <person name="Lowe T."/>
            <person name="McCombie W.R."/>
            <person name="Paulsen I."/>
            <person name="Potashkin J."/>
            <person name="Shpakovski G.V."/>
            <person name="Ussery D."/>
            <person name="Barrell B.G."/>
            <person name="Nurse P."/>
        </authorList>
    </citation>
    <scope>NUCLEOTIDE SEQUENCE [LARGE SCALE GENOMIC DNA]</scope>
    <source>
        <strain>972 / ATCC 24843</strain>
    </source>
</reference>
<dbReference type="EMBL" id="CU329670">
    <property type="protein sequence ID" value="CAA22601.1"/>
    <property type="molecule type" value="Genomic_DNA"/>
</dbReference>
<dbReference type="PIR" id="T37750">
    <property type="entry name" value="T37750"/>
</dbReference>
<dbReference type="RefSeq" id="NP_593125.1">
    <property type="nucleotide sequence ID" value="NM_001018521.1"/>
</dbReference>
<dbReference type="SMR" id="O14068"/>
<dbReference type="BioGRID" id="279233">
    <property type="interactions" value="3"/>
</dbReference>
<dbReference type="FunCoup" id="O14068">
    <property type="interactions" value="1"/>
</dbReference>
<dbReference type="iPTMnet" id="O14068"/>
<dbReference type="PaxDb" id="4896-SPAC1687.07.1"/>
<dbReference type="EnsemblFungi" id="SPAC1687.07.1">
    <property type="protein sequence ID" value="SPAC1687.07.1:pep"/>
    <property type="gene ID" value="SPAC1687.07"/>
</dbReference>
<dbReference type="KEGG" id="spo:2542784"/>
<dbReference type="PomBase" id="SPAC1687.07"/>
<dbReference type="VEuPathDB" id="FungiDB:SPAC1687.07"/>
<dbReference type="eggNOG" id="ENOG502S73R">
    <property type="taxonomic scope" value="Eukaryota"/>
</dbReference>
<dbReference type="HOGENOM" id="CLU_128832_1_1_1"/>
<dbReference type="InParanoid" id="O14068"/>
<dbReference type="OMA" id="NIRDGDS"/>
<dbReference type="PhylomeDB" id="O14068"/>
<dbReference type="PRO" id="PR:O14068"/>
<dbReference type="Proteomes" id="UP000002485">
    <property type="component" value="Chromosome I"/>
</dbReference>
<dbReference type="GO" id="GO:0005737">
    <property type="term" value="C:cytoplasm"/>
    <property type="evidence" value="ECO:0007005"/>
    <property type="project" value="PomBase"/>
</dbReference>
<dbReference type="InterPro" id="IPR018559">
    <property type="entry name" value="DUF2015"/>
</dbReference>
<dbReference type="PANTHER" id="PTHR28023">
    <property type="entry name" value="UPF0357 PROTEIN YCL012C"/>
    <property type="match status" value="1"/>
</dbReference>
<dbReference type="PANTHER" id="PTHR28023:SF1">
    <property type="entry name" value="UPF0357 PROTEIN YCL012C"/>
    <property type="match status" value="1"/>
</dbReference>
<dbReference type="Pfam" id="PF09435">
    <property type="entry name" value="DUF2015"/>
    <property type="match status" value="1"/>
</dbReference>
<evidence type="ECO:0000255" key="1"/>
<evidence type="ECO:0000305" key="2"/>
<gene>
    <name type="ORF">SPAC1687.07</name>
</gene>
<accession>O14068</accession>
<keyword id="KW-1185">Reference proteome</keyword>
<keyword id="KW-0732">Signal</keyword>
<sequence>MASFHIIVSYVTVVLAIIIAITFAARRFWISRYRSIRYSPVENSFEADFNNGLNSSSFDIAQNILAQDTRAGLDEAATSQIRGLMKQLQCSFDQARLIYIRKVMSDNNVDSTGMPLDNKAVTKL</sequence>